<sequence>MAFELPKLPYAFDALEPHFDKETMEIHHDRHHNTYVTKLNAAVEGTDLESKSIEEIVANLDSVPANIQTAVRNNGGGHLNHSLFWELLSPNSEEKGTVVEKIKEQWGSLEEFKKEFADKAAARFGSGWAWLVVNNGQLEIVTTPNQDNPLTEGKTPILGLDVWEHAYYLKYQNKRPDYIGAFWNVVNWEKVDELYNATK</sequence>
<keyword id="KW-0408">Iron</keyword>
<keyword id="KW-0464">Manganese</keyword>
<keyword id="KW-0479">Metal-binding</keyword>
<keyword id="KW-0560">Oxidoreductase</keyword>
<keyword id="KW-0346">Stress response</keyword>
<protein>
    <recommendedName>
        <fullName>Superoxide dismutase [Mn/Fe] 1</fullName>
        <ecNumber evidence="2">1.15.1.1</ecNumber>
    </recommendedName>
</protein>
<proteinExistence type="inferred from homology"/>
<name>SODM1_STAAM</name>
<organism>
    <name type="scientific">Staphylococcus aureus (strain Mu50 / ATCC 700699)</name>
    <dbReference type="NCBI Taxonomy" id="158878"/>
    <lineage>
        <taxon>Bacteria</taxon>
        <taxon>Bacillati</taxon>
        <taxon>Bacillota</taxon>
        <taxon>Bacilli</taxon>
        <taxon>Bacillales</taxon>
        <taxon>Staphylococcaceae</taxon>
        <taxon>Staphylococcus</taxon>
    </lineage>
</organism>
<comment type="function">
    <text evidence="2">Destroys superoxide anion radicals which are normally produced within the cells and which are toxic to biological systems. Catalyzes the dismutation of superoxide anion radicals into O2 and H2O2 by successive reduction and oxidation of the transition metal ion at the active site.</text>
</comment>
<comment type="catalytic activity">
    <reaction evidence="2">
        <text>2 superoxide + 2 H(+) = H2O2 + O2</text>
        <dbReference type="Rhea" id="RHEA:20696"/>
        <dbReference type="ChEBI" id="CHEBI:15378"/>
        <dbReference type="ChEBI" id="CHEBI:15379"/>
        <dbReference type="ChEBI" id="CHEBI:16240"/>
        <dbReference type="ChEBI" id="CHEBI:18421"/>
        <dbReference type="EC" id="1.15.1.1"/>
    </reaction>
    <physiologicalReaction direction="left-to-right" evidence="2">
        <dbReference type="Rhea" id="RHEA:20697"/>
    </physiologicalReaction>
</comment>
<comment type="cofactor">
    <cofactor evidence="2">
        <name>Mn(2+)</name>
        <dbReference type="ChEBI" id="CHEBI:29035"/>
    </cofactor>
    <cofactor evidence="2">
        <name>Fe(3+)</name>
        <dbReference type="ChEBI" id="CHEBI:29034"/>
    </cofactor>
    <text evidence="2">Binds 1 Mn(2+) or Fe(3+) ion per subunit.</text>
</comment>
<comment type="subunit">
    <text evidence="1">Homodimer. Can also form a heterodimer with SodM (By similarity).</text>
</comment>
<comment type="similarity">
    <text evidence="3">Belongs to the iron/manganese superoxide dismutase family.</text>
</comment>
<dbReference type="EC" id="1.15.1.1" evidence="2"/>
<dbReference type="EMBL" id="BA000017">
    <property type="protein sequence ID" value="BAB57715.1"/>
    <property type="molecule type" value="Genomic_DNA"/>
</dbReference>
<dbReference type="RefSeq" id="WP_000863556.1">
    <property type="nucleotide sequence ID" value="NC_002758.2"/>
</dbReference>
<dbReference type="SMR" id="P0A0J1"/>
<dbReference type="KEGG" id="sav:SAV1553"/>
<dbReference type="HOGENOM" id="CLU_031625_0_1_9"/>
<dbReference type="PhylomeDB" id="P0A0J1"/>
<dbReference type="Proteomes" id="UP000002481">
    <property type="component" value="Chromosome"/>
</dbReference>
<dbReference type="GO" id="GO:0005737">
    <property type="term" value="C:cytoplasm"/>
    <property type="evidence" value="ECO:0007669"/>
    <property type="project" value="TreeGrafter"/>
</dbReference>
<dbReference type="GO" id="GO:0046872">
    <property type="term" value="F:metal ion binding"/>
    <property type="evidence" value="ECO:0007669"/>
    <property type="project" value="UniProtKB-KW"/>
</dbReference>
<dbReference type="GO" id="GO:0004784">
    <property type="term" value="F:superoxide dismutase activity"/>
    <property type="evidence" value="ECO:0007669"/>
    <property type="project" value="UniProtKB-EC"/>
</dbReference>
<dbReference type="FunFam" id="1.10.287.990:FF:000001">
    <property type="entry name" value="Superoxide dismutase"/>
    <property type="match status" value="1"/>
</dbReference>
<dbReference type="FunFam" id="3.55.40.20:FF:000001">
    <property type="entry name" value="Superoxide dismutase"/>
    <property type="match status" value="1"/>
</dbReference>
<dbReference type="Gene3D" id="1.10.287.990">
    <property type="entry name" value="Fe,Mn superoxide dismutase (SOD) domain"/>
    <property type="match status" value="1"/>
</dbReference>
<dbReference type="Gene3D" id="3.55.40.20">
    <property type="entry name" value="Iron/manganese superoxide dismutase, C-terminal domain"/>
    <property type="match status" value="1"/>
</dbReference>
<dbReference type="InterPro" id="IPR001189">
    <property type="entry name" value="Mn/Fe_SOD"/>
</dbReference>
<dbReference type="InterPro" id="IPR019833">
    <property type="entry name" value="Mn/Fe_SOD_BS"/>
</dbReference>
<dbReference type="InterPro" id="IPR019832">
    <property type="entry name" value="Mn/Fe_SOD_C"/>
</dbReference>
<dbReference type="InterPro" id="IPR019831">
    <property type="entry name" value="Mn/Fe_SOD_N"/>
</dbReference>
<dbReference type="InterPro" id="IPR036324">
    <property type="entry name" value="Mn/Fe_SOD_N_sf"/>
</dbReference>
<dbReference type="InterPro" id="IPR036314">
    <property type="entry name" value="SOD_C_sf"/>
</dbReference>
<dbReference type="PANTHER" id="PTHR43595">
    <property type="entry name" value="37S RIBOSOMAL PROTEIN S26, MITOCHONDRIAL"/>
    <property type="match status" value="1"/>
</dbReference>
<dbReference type="PANTHER" id="PTHR43595:SF2">
    <property type="entry name" value="SMALL RIBOSOMAL SUBUNIT PROTEIN MS42"/>
    <property type="match status" value="1"/>
</dbReference>
<dbReference type="Pfam" id="PF02777">
    <property type="entry name" value="Sod_Fe_C"/>
    <property type="match status" value="1"/>
</dbReference>
<dbReference type="Pfam" id="PF00081">
    <property type="entry name" value="Sod_Fe_N"/>
    <property type="match status" value="1"/>
</dbReference>
<dbReference type="PIRSF" id="PIRSF000349">
    <property type="entry name" value="SODismutase"/>
    <property type="match status" value="1"/>
</dbReference>
<dbReference type="PRINTS" id="PR01703">
    <property type="entry name" value="MNSODISMTASE"/>
</dbReference>
<dbReference type="SUPFAM" id="SSF54719">
    <property type="entry name" value="Fe,Mn superoxide dismutase (SOD), C-terminal domain"/>
    <property type="match status" value="1"/>
</dbReference>
<dbReference type="SUPFAM" id="SSF46609">
    <property type="entry name" value="Fe,Mn superoxide dismutase (SOD), N-terminal domain"/>
    <property type="match status" value="1"/>
</dbReference>
<dbReference type="PROSITE" id="PS00088">
    <property type="entry name" value="SOD_MN"/>
    <property type="match status" value="1"/>
</dbReference>
<feature type="chain" id="PRO_0000160070" description="Superoxide dismutase [Mn/Fe] 1">
    <location>
        <begin position="1"/>
        <end position="199"/>
    </location>
</feature>
<feature type="binding site" evidence="2">
    <location>
        <position position="27"/>
    </location>
    <ligand>
        <name>Fe(3+)</name>
        <dbReference type="ChEBI" id="CHEBI:29034"/>
    </ligand>
</feature>
<feature type="binding site" evidence="2">
    <location>
        <position position="27"/>
    </location>
    <ligand>
        <name>Mn(2+)</name>
        <dbReference type="ChEBI" id="CHEBI:29035"/>
    </ligand>
</feature>
<feature type="binding site" evidence="2">
    <location>
        <position position="81"/>
    </location>
    <ligand>
        <name>Fe(3+)</name>
        <dbReference type="ChEBI" id="CHEBI:29034"/>
    </ligand>
</feature>
<feature type="binding site" evidence="2">
    <location>
        <position position="81"/>
    </location>
    <ligand>
        <name>Mn(2+)</name>
        <dbReference type="ChEBI" id="CHEBI:29035"/>
    </ligand>
</feature>
<feature type="binding site" evidence="2">
    <location>
        <position position="161"/>
    </location>
    <ligand>
        <name>Fe(3+)</name>
        <dbReference type="ChEBI" id="CHEBI:29034"/>
    </ligand>
</feature>
<feature type="binding site" evidence="2">
    <location>
        <position position="161"/>
    </location>
    <ligand>
        <name>Mn(2+)</name>
        <dbReference type="ChEBI" id="CHEBI:29035"/>
    </ligand>
</feature>
<feature type="binding site" evidence="2">
    <location>
        <position position="165"/>
    </location>
    <ligand>
        <name>Fe(3+)</name>
        <dbReference type="ChEBI" id="CHEBI:29034"/>
    </ligand>
</feature>
<feature type="binding site" evidence="2">
    <location>
        <position position="165"/>
    </location>
    <ligand>
        <name>Mn(2+)</name>
        <dbReference type="ChEBI" id="CHEBI:29035"/>
    </ligand>
</feature>
<evidence type="ECO:0000250" key="1"/>
<evidence type="ECO:0000250" key="2">
    <source>
        <dbReference type="UniProtKB" id="P80293"/>
    </source>
</evidence>
<evidence type="ECO:0000305" key="3"/>
<gene>
    <name type="primary">sodA</name>
    <name type="ordered locus">SAV1553</name>
</gene>
<accession>P0A0J1</accession>
<accession>Q9Z5W5</accession>
<reference key="1">
    <citation type="journal article" date="2001" name="Lancet">
        <title>Whole genome sequencing of meticillin-resistant Staphylococcus aureus.</title>
        <authorList>
            <person name="Kuroda M."/>
            <person name="Ohta T."/>
            <person name="Uchiyama I."/>
            <person name="Baba T."/>
            <person name="Yuzawa H."/>
            <person name="Kobayashi I."/>
            <person name="Cui L."/>
            <person name="Oguchi A."/>
            <person name="Aoki K."/>
            <person name="Nagai Y."/>
            <person name="Lian J.-Q."/>
            <person name="Ito T."/>
            <person name="Kanamori M."/>
            <person name="Matsumaru H."/>
            <person name="Maruyama A."/>
            <person name="Murakami H."/>
            <person name="Hosoyama A."/>
            <person name="Mizutani-Ui Y."/>
            <person name="Takahashi N.K."/>
            <person name="Sawano T."/>
            <person name="Inoue R."/>
            <person name="Kaito C."/>
            <person name="Sekimizu K."/>
            <person name="Hirakawa H."/>
            <person name="Kuhara S."/>
            <person name="Goto S."/>
            <person name="Yabuzaki J."/>
            <person name="Kanehisa M."/>
            <person name="Yamashita A."/>
            <person name="Oshima K."/>
            <person name="Furuya K."/>
            <person name="Yoshino C."/>
            <person name="Shiba T."/>
            <person name="Hattori M."/>
            <person name="Ogasawara N."/>
            <person name="Hayashi H."/>
            <person name="Hiramatsu K."/>
        </authorList>
    </citation>
    <scope>NUCLEOTIDE SEQUENCE [LARGE SCALE GENOMIC DNA]</scope>
    <source>
        <strain>Mu50 / ATCC 700699</strain>
    </source>
</reference>